<feature type="chain" id="PRO_0000138522" description="Peptide methionine sulfoxide reductase MsrA/MsrB">
    <location>
        <begin position="1"/>
        <end position="309"/>
    </location>
</feature>
<feature type="domain" description="MsrB" evidence="2">
    <location>
        <begin position="170"/>
        <end position="293"/>
    </location>
</feature>
<feature type="region of interest" description="Peptide methionine sulfoxide reductase A">
    <location>
        <begin position="1"/>
        <end position="153"/>
    </location>
</feature>
<feature type="active site" evidence="1">
    <location>
        <position position="8"/>
    </location>
</feature>
<feature type="active site" description="Nucleophile" evidence="2">
    <location>
        <position position="282"/>
    </location>
</feature>
<comment type="function">
    <text evidence="1">Has an important function as a repair enzyme for proteins that have been inactivated by oxidation. Catalyzes the reversible oxidation-reduction of methionine sulfoxide in proteins to methionine (By similarity).</text>
</comment>
<comment type="catalytic activity">
    <reaction>
        <text>L-methionyl-[protein] + [thioredoxin]-disulfide + H2O = L-methionyl-(S)-S-oxide-[protein] + [thioredoxin]-dithiol</text>
        <dbReference type="Rhea" id="RHEA:14217"/>
        <dbReference type="Rhea" id="RHEA-COMP:10698"/>
        <dbReference type="Rhea" id="RHEA-COMP:10700"/>
        <dbReference type="Rhea" id="RHEA-COMP:12313"/>
        <dbReference type="Rhea" id="RHEA-COMP:12315"/>
        <dbReference type="ChEBI" id="CHEBI:15377"/>
        <dbReference type="ChEBI" id="CHEBI:16044"/>
        <dbReference type="ChEBI" id="CHEBI:29950"/>
        <dbReference type="ChEBI" id="CHEBI:44120"/>
        <dbReference type="ChEBI" id="CHEBI:50058"/>
        <dbReference type="EC" id="1.8.4.11"/>
    </reaction>
</comment>
<comment type="catalytic activity">
    <reaction>
        <text>[thioredoxin]-disulfide + L-methionine + H2O = L-methionine (S)-S-oxide + [thioredoxin]-dithiol</text>
        <dbReference type="Rhea" id="RHEA:19993"/>
        <dbReference type="Rhea" id="RHEA-COMP:10698"/>
        <dbReference type="Rhea" id="RHEA-COMP:10700"/>
        <dbReference type="ChEBI" id="CHEBI:15377"/>
        <dbReference type="ChEBI" id="CHEBI:29950"/>
        <dbReference type="ChEBI" id="CHEBI:50058"/>
        <dbReference type="ChEBI" id="CHEBI:57844"/>
        <dbReference type="ChEBI" id="CHEBI:58772"/>
        <dbReference type="EC" id="1.8.4.11"/>
    </reaction>
</comment>
<comment type="catalytic activity">
    <reaction>
        <text>L-methionyl-[protein] + [thioredoxin]-disulfide + H2O = L-methionyl-(R)-S-oxide-[protein] + [thioredoxin]-dithiol</text>
        <dbReference type="Rhea" id="RHEA:24164"/>
        <dbReference type="Rhea" id="RHEA-COMP:10698"/>
        <dbReference type="Rhea" id="RHEA-COMP:10700"/>
        <dbReference type="Rhea" id="RHEA-COMP:12313"/>
        <dbReference type="Rhea" id="RHEA-COMP:12314"/>
        <dbReference type="ChEBI" id="CHEBI:15377"/>
        <dbReference type="ChEBI" id="CHEBI:16044"/>
        <dbReference type="ChEBI" id="CHEBI:29950"/>
        <dbReference type="ChEBI" id="CHEBI:45764"/>
        <dbReference type="ChEBI" id="CHEBI:50058"/>
        <dbReference type="EC" id="1.8.4.12"/>
    </reaction>
</comment>
<comment type="similarity">
    <text evidence="3">In the N-terminal section; belongs to the MsrA Met sulfoxide reductase family.</text>
</comment>
<comment type="similarity">
    <text evidence="3">In the C-terminal section; belongs to the MsrB Met sulfoxide reductase family.</text>
</comment>
<comment type="sequence caution" evidence="3">
    <conflict type="erroneous initiation">
        <sequence resource="EMBL-CDS" id="AAM79874"/>
    </conflict>
</comment>
<organism>
    <name type="scientific">Streptococcus pyogenes serotype M3 (strain ATCC BAA-595 / MGAS315)</name>
    <dbReference type="NCBI Taxonomy" id="198466"/>
    <lineage>
        <taxon>Bacteria</taxon>
        <taxon>Bacillati</taxon>
        <taxon>Bacillota</taxon>
        <taxon>Bacilli</taxon>
        <taxon>Lactobacillales</taxon>
        <taxon>Streptococcaceae</taxon>
        <taxon>Streptococcus</taxon>
    </lineage>
</organism>
<dbReference type="EC" id="1.8.4.11"/>
<dbReference type="EC" id="1.8.4.12"/>
<dbReference type="EMBL" id="AE014074">
    <property type="protein sequence ID" value="AAM79874.1"/>
    <property type="status" value="ALT_INIT"/>
    <property type="molecule type" value="Genomic_DNA"/>
</dbReference>
<dbReference type="SMR" id="P0DC40"/>
<dbReference type="KEGG" id="spg:SpyM3_1267"/>
<dbReference type="HOGENOM" id="CLU_031040_1_1_9"/>
<dbReference type="Proteomes" id="UP000000564">
    <property type="component" value="Chromosome"/>
</dbReference>
<dbReference type="GO" id="GO:0005737">
    <property type="term" value="C:cytoplasm"/>
    <property type="evidence" value="ECO:0007669"/>
    <property type="project" value="TreeGrafter"/>
</dbReference>
<dbReference type="GO" id="GO:0033744">
    <property type="term" value="F:L-methionine:thioredoxin-disulfide S-oxidoreductase activity"/>
    <property type="evidence" value="ECO:0007669"/>
    <property type="project" value="RHEA"/>
</dbReference>
<dbReference type="GO" id="GO:0033743">
    <property type="term" value="F:peptide-methionine (R)-S-oxide reductase activity"/>
    <property type="evidence" value="ECO:0007669"/>
    <property type="project" value="UniProtKB-UniRule"/>
</dbReference>
<dbReference type="GO" id="GO:0008113">
    <property type="term" value="F:peptide-methionine (S)-S-oxide reductase activity"/>
    <property type="evidence" value="ECO:0007669"/>
    <property type="project" value="UniProtKB-UniRule"/>
</dbReference>
<dbReference type="GO" id="GO:0036211">
    <property type="term" value="P:protein modification process"/>
    <property type="evidence" value="ECO:0007669"/>
    <property type="project" value="UniProtKB-UniRule"/>
</dbReference>
<dbReference type="GO" id="GO:0030091">
    <property type="term" value="P:protein repair"/>
    <property type="evidence" value="ECO:0007669"/>
    <property type="project" value="InterPro"/>
</dbReference>
<dbReference type="GO" id="GO:0006979">
    <property type="term" value="P:response to oxidative stress"/>
    <property type="evidence" value="ECO:0007669"/>
    <property type="project" value="InterPro"/>
</dbReference>
<dbReference type="FunFam" id="3.30.1060.10:FF:000007">
    <property type="entry name" value="Peptide methionine sulfoxide reductase msrA/msrB"/>
    <property type="match status" value="1"/>
</dbReference>
<dbReference type="FunFam" id="2.170.150.20:FF:000003">
    <property type="entry name" value="Peptide methionine sulfoxide reductase MsrB"/>
    <property type="match status" value="1"/>
</dbReference>
<dbReference type="Gene3D" id="2.170.150.20">
    <property type="entry name" value="Peptide methionine sulfoxide reductase"/>
    <property type="match status" value="1"/>
</dbReference>
<dbReference type="Gene3D" id="3.30.1060.10">
    <property type="entry name" value="Peptide methionine sulphoxide reductase MsrA"/>
    <property type="match status" value="1"/>
</dbReference>
<dbReference type="HAMAP" id="MF_01401">
    <property type="entry name" value="MsrA"/>
    <property type="match status" value="1"/>
</dbReference>
<dbReference type="HAMAP" id="MF_01400">
    <property type="entry name" value="MsrB"/>
    <property type="match status" value="1"/>
</dbReference>
<dbReference type="InterPro" id="IPR002569">
    <property type="entry name" value="Met_Sox_Rdtase_MsrA_dom"/>
</dbReference>
<dbReference type="InterPro" id="IPR036509">
    <property type="entry name" value="Met_Sox_Rdtase_MsrA_sf"/>
</dbReference>
<dbReference type="InterPro" id="IPR028427">
    <property type="entry name" value="Met_Sox_Rdtase_MsrB"/>
</dbReference>
<dbReference type="InterPro" id="IPR002579">
    <property type="entry name" value="Met_Sox_Rdtase_MsrB_dom"/>
</dbReference>
<dbReference type="InterPro" id="IPR011057">
    <property type="entry name" value="Mss4-like_sf"/>
</dbReference>
<dbReference type="NCBIfam" id="TIGR00401">
    <property type="entry name" value="msrA"/>
    <property type="match status" value="1"/>
</dbReference>
<dbReference type="NCBIfam" id="TIGR00357">
    <property type="entry name" value="peptide-methionine (R)-S-oxide reductase MsrB"/>
    <property type="match status" value="1"/>
</dbReference>
<dbReference type="PANTHER" id="PTHR10173">
    <property type="entry name" value="METHIONINE SULFOXIDE REDUCTASE"/>
    <property type="match status" value="1"/>
</dbReference>
<dbReference type="PANTHER" id="PTHR10173:SF59">
    <property type="entry name" value="PEPTIDE METHIONINE SULFOXIDE REDUCTASE MSRA_MSRB"/>
    <property type="match status" value="1"/>
</dbReference>
<dbReference type="Pfam" id="PF01625">
    <property type="entry name" value="PMSR"/>
    <property type="match status" value="1"/>
</dbReference>
<dbReference type="Pfam" id="PF01641">
    <property type="entry name" value="SelR"/>
    <property type="match status" value="1"/>
</dbReference>
<dbReference type="SUPFAM" id="SSF51316">
    <property type="entry name" value="Mss4-like"/>
    <property type="match status" value="1"/>
</dbReference>
<dbReference type="SUPFAM" id="SSF55068">
    <property type="entry name" value="Peptide methionine sulfoxide reductase"/>
    <property type="match status" value="1"/>
</dbReference>
<dbReference type="PROSITE" id="PS51790">
    <property type="entry name" value="MSRB"/>
    <property type="match status" value="1"/>
</dbReference>
<reference key="1">
    <citation type="journal article" date="2002" name="Proc. Natl. Acad. Sci. U.S.A.">
        <title>Genome sequence of a serotype M3 strain of group A Streptococcus: phage-encoded toxins, the high-virulence phenotype, and clone emergence.</title>
        <authorList>
            <person name="Beres S.B."/>
            <person name="Sylva G.L."/>
            <person name="Barbian K.D."/>
            <person name="Lei B."/>
            <person name="Hoff J.S."/>
            <person name="Mammarella N.D."/>
            <person name="Liu M.-Y."/>
            <person name="Smoot J.C."/>
            <person name="Porcella S.F."/>
            <person name="Parkins L.D."/>
            <person name="Campbell D.S."/>
            <person name="Smith T.M."/>
            <person name="McCormick J.K."/>
            <person name="Leung D.Y.M."/>
            <person name="Schlievert P.M."/>
            <person name="Musser J.M."/>
        </authorList>
    </citation>
    <scope>NUCLEOTIDE SEQUENCE [LARGE SCALE GENOMIC DNA]</scope>
    <source>
        <strain>ATCC BAA-595 / MGAS315</strain>
    </source>
</reference>
<gene>
    <name type="primary">msrAB</name>
    <name type="synonym">msrA.1</name>
    <name type="ordered locus">SpyM3_1267</name>
</gene>
<name>MSRAB_STRP3</name>
<sequence length="309" mass="35161">MIYLAEGCFWGVEEYFSQVDGVLDAVSGYANGRGDTTNYQLIHQTGHAETVEVTYDANRISLKELLLHFFRIIDPTSLNKQGNDRGSQYRTGIYYTDKADLAIIDEVFKEKAKDYKKKIVVEKAPLKHFIKAEEYHQDYLKKNPNGYCHIDINQATYPVIDESKYPKPSATEIKAKLSADEYRVTQKNETEKAFSNRYWDSFDAGIYVDVVTGEPLFSSKDKFESGCGWPSFSRPISPDVVRYKEDKSFNMTRTEVRSRSGNSHLGHVFTDGPKDQGGLRYCINSLSITFIPKADMEAKGYGYLLSSVE</sequence>
<proteinExistence type="inferred from homology"/>
<keyword id="KW-0511">Multifunctional enzyme</keyword>
<keyword id="KW-0560">Oxidoreductase</keyword>
<evidence type="ECO:0000250" key="1"/>
<evidence type="ECO:0000255" key="2">
    <source>
        <dbReference type="PROSITE-ProRule" id="PRU01126"/>
    </source>
</evidence>
<evidence type="ECO:0000305" key="3"/>
<accession>P0DC40</accession>
<accession>Q938P0</accession>
<protein>
    <recommendedName>
        <fullName>Peptide methionine sulfoxide reductase MsrA/MsrB</fullName>
    </recommendedName>
    <domain>
        <recommendedName>
            <fullName>Peptide methionine sulfoxide reductase MsrA</fullName>
            <shortName>Protein-methionine-S-oxide reductase</shortName>
            <ecNumber>1.8.4.11</ecNumber>
        </recommendedName>
        <alternativeName>
            <fullName>Peptide-methionine (S)-S-oxide reductase</fullName>
            <shortName>Peptide Met(O) reductase</shortName>
        </alternativeName>
    </domain>
    <domain>
        <recommendedName>
            <fullName>Peptide methionine sulfoxide reductase MsrB</fullName>
            <ecNumber>1.8.4.12</ecNumber>
        </recommendedName>
        <alternativeName>
            <fullName>Peptide-methionine (R)-S-oxide reductase</fullName>
        </alternativeName>
    </domain>
</protein>